<comment type="function">
    <text evidence="1">This protein is one of the early assembly proteins of the 50S ribosomal subunit, although it is not seen to bind rRNA by itself. It is important during the early stages of 50S assembly.</text>
</comment>
<comment type="subunit">
    <text evidence="1">Part of the 50S ribosomal subunit.</text>
</comment>
<comment type="similarity">
    <text evidence="1">Belongs to the universal ribosomal protein uL13 family.</text>
</comment>
<name>RL13_THEAC</name>
<evidence type="ECO:0000255" key="1">
    <source>
        <dbReference type="HAMAP-Rule" id="MF_01366"/>
    </source>
</evidence>
<evidence type="ECO:0000305" key="2"/>
<keyword id="KW-1185">Reference proteome</keyword>
<keyword id="KW-0687">Ribonucleoprotein</keyword>
<keyword id="KW-0689">Ribosomal protein</keyword>
<dbReference type="EMBL" id="AL445064">
    <property type="protein sequence ID" value="CAC11575.1"/>
    <property type="molecule type" value="Genomic_DNA"/>
</dbReference>
<dbReference type="RefSeq" id="WP_010900860.1">
    <property type="nucleotide sequence ID" value="NC_002578.1"/>
</dbReference>
<dbReference type="SMR" id="Q9HL07"/>
<dbReference type="FunCoup" id="Q9HL07">
    <property type="interactions" value="145"/>
</dbReference>
<dbReference type="STRING" id="273075.gene:9571653"/>
<dbReference type="PaxDb" id="273075-Ta0433"/>
<dbReference type="EnsemblBacteria" id="CAC11575">
    <property type="protein sequence ID" value="CAC11575"/>
    <property type="gene ID" value="CAC11575"/>
</dbReference>
<dbReference type="KEGG" id="tac:Ta0433"/>
<dbReference type="eggNOG" id="arCOG04242">
    <property type="taxonomic scope" value="Archaea"/>
</dbReference>
<dbReference type="HOGENOM" id="CLU_076922_1_0_2"/>
<dbReference type="InParanoid" id="Q9HL07"/>
<dbReference type="OrthoDB" id="7668at2157"/>
<dbReference type="Proteomes" id="UP000001024">
    <property type="component" value="Chromosome"/>
</dbReference>
<dbReference type="GO" id="GO:0022625">
    <property type="term" value="C:cytosolic large ribosomal subunit"/>
    <property type="evidence" value="ECO:0007669"/>
    <property type="project" value="TreeGrafter"/>
</dbReference>
<dbReference type="GO" id="GO:0003729">
    <property type="term" value="F:mRNA binding"/>
    <property type="evidence" value="ECO:0007669"/>
    <property type="project" value="TreeGrafter"/>
</dbReference>
<dbReference type="GO" id="GO:0003735">
    <property type="term" value="F:structural constituent of ribosome"/>
    <property type="evidence" value="ECO:0007669"/>
    <property type="project" value="InterPro"/>
</dbReference>
<dbReference type="GO" id="GO:0017148">
    <property type="term" value="P:negative regulation of translation"/>
    <property type="evidence" value="ECO:0007669"/>
    <property type="project" value="TreeGrafter"/>
</dbReference>
<dbReference type="GO" id="GO:0006412">
    <property type="term" value="P:translation"/>
    <property type="evidence" value="ECO:0007669"/>
    <property type="project" value="UniProtKB-UniRule"/>
</dbReference>
<dbReference type="CDD" id="cd00392">
    <property type="entry name" value="Ribosomal_L13"/>
    <property type="match status" value="1"/>
</dbReference>
<dbReference type="Gene3D" id="3.90.1180.10">
    <property type="entry name" value="Ribosomal protein L13"/>
    <property type="match status" value="1"/>
</dbReference>
<dbReference type="HAMAP" id="MF_01366">
    <property type="entry name" value="Ribosomal_uL13"/>
    <property type="match status" value="1"/>
</dbReference>
<dbReference type="InterPro" id="IPR005822">
    <property type="entry name" value="Ribosomal_uL13"/>
</dbReference>
<dbReference type="InterPro" id="IPR005823">
    <property type="entry name" value="Ribosomal_uL13_bac-type"/>
</dbReference>
<dbReference type="InterPro" id="IPR005755">
    <property type="entry name" value="Ribosomal_uL13_euk/arc"/>
</dbReference>
<dbReference type="InterPro" id="IPR036899">
    <property type="entry name" value="Ribosomal_uL13_sf"/>
</dbReference>
<dbReference type="NCBIfam" id="TIGR01077">
    <property type="entry name" value="L13_A_E"/>
    <property type="match status" value="1"/>
</dbReference>
<dbReference type="NCBIfam" id="NF005004">
    <property type="entry name" value="PRK06394.1"/>
    <property type="match status" value="1"/>
</dbReference>
<dbReference type="PANTHER" id="PTHR11545:SF3">
    <property type="entry name" value="LARGE RIBOSOMAL SUBUNIT PROTEIN UL13"/>
    <property type="match status" value="1"/>
</dbReference>
<dbReference type="PANTHER" id="PTHR11545">
    <property type="entry name" value="RIBOSOMAL PROTEIN L13"/>
    <property type="match status" value="1"/>
</dbReference>
<dbReference type="Pfam" id="PF00572">
    <property type="entry name" value="Ribosomal_L13"/>
    <property type="match status" value="1"/>
</dbReference>
<dbReference type="PIRSF" id="PIRSF002181">
    <property type="entry name" value="Ribosomal_L13"/>
    <property type="match status" value="1"/>
</dbReference>
<dbReference type="SUPFAM" id="SSF52161">
    <property type="entry name" value="Ribosomal protein L13"/>
    <property type="match status" value="1"/>
</dbReference>
<feature type="chain" id="PRO_0000261852" description="Large ribosomal subunit protein uL13">
    <location>
        <begin position="1"/>
        <end position="136"/>
    </location>
</feature>
<organism>
    <name type="scientific">Thermoplasma acidophilum (strain ATCC 25905 / DSM 1728 / JCM 9062 / NBRC 15155 / AMRC-C165)</name>
    <dbReference type="NCBI Taxonomy" id="273075"/>
    <lineage>
        <taxon>Archaea</taxon>
        <taxon>Methanobacteriati</taxon>
        <taxon>Thermoplasmatota</taxon>
        <taxon>Thermoplasmata</taxon>
        <taxon>Thermoplasmatales</taxon>
        <taxon>Thermoplasmataceae</taxon>
        <taxon>Thermoplasma</taxon>
    </lineage>
</organism>
<reference key="1">
    <citation type="journal article" date="2000" name="Nature">
        <title>The genome sequence of the thermoacidophilic scavenger Thermoplasma acidophilum.</title>
        <authorList>
            <person name="Ruepp A."/>
            <person name="Graml W."/>
            <person name="Santos-Martinez M.-L."/>
            <person name="Koretke K.K."/>
            <person name="Volker C."/>
            <person name="Mewes H.-W."/>
            <person name="Frishman D."/>
            <person name="Stocker S."/>
            <person name="Lupas A.N."/>
            <person name="Baumeister W."/>
        </authorList>
    </citation>
    <scope>NUCLEOTIDE SEQUENCE [LARGE SCALE GENOMIC DNA]</scope>
    <source>
        <strain>ATCC 25905 / DSM 1728 / JCM 9062 / NBRC 15155 / AMRC-C165</strain>
    </source>
</reference>
<protein>
    <recommendedName>
        <fullName evidence="1">Large ribosomal subunit protein uL13</fullName>
    </recommendedName>
    <alternativeName>
        <fullName evidence="2">50S ribosomal protein L13</fullName>
    </alternativeName>
</protein>
<accession>Q9HL07</accession>
<sequence length="136" mass="15098">MRVIDASGAIYGRLSAYVAKRLLEGEEITIVNASKAVITGNKEFIIEKFKERLDIGSVRKGPYYPKTPENILRRSIGDMLPKKITKGKEALARCRVYRNTPPDIEKEKVEKVDGVVTDKVSGIITLGDLSKELGGY</sequence>
<proteinExistence type="inferred from homology"/>
<gene>
    <name evidence="1" type="primary">rpl13</name>
    <name type="ordered locus">Ta0433</name>
</gene>